<keyword id="KW-1185">Reference proteome</keyword>
<keyword id="KW-0687">Ribonucleoprotein</keyword>
<keyword id="KW-0689">Ribosomal protein</keyword>
<sequence>MGVYQGRDLRKITGGKKNVSRGKRKFEIGSQPTETKVYSEDIREKARVLGGNAKVRLTYAAYANVINLSDGTAKKVKILEVIESSANREYARRGIIVKGSIIRTEIGKALVTSRPGQHGVINAILMQQ</sequence>
<name>RS8E_METS5</name>
<gene>
    <name evidence="1" type="primary">rps8e</name>
    <name type="ordered locus">Msed_0172</name>
</gene>
<comment type="subunit">
    <text evidence="1">Part of the 30S ribosomal subunit.</text>
</comment>
<comment type="similarity">
    <text evidence="1">Belongs to the eukaryotic ribosomal protein eS8 family.</text>
</comment>
<reference key="1">
    <citation type="journal article" date="2008" name="Appl. Environ. Microbiol.">
        <title>The genome sequence of the metal-mobilizing, extremely thermoacidophilic archaeon Metallosphaera sedula provides insights into bioleaching-associated metabolism.</title>
        <authorList>
            <person name="Auernik K.S."/>
            <person name="Maezato Y."/>
            <person name="Blum P.H."/>
            <person name="Kelly R.M."/>
        </authorList>
    </citation>
    <scope>NUCLEOTIDE SEQUENCE [LARGE SCALE GENOMIC DNA]</scope>
    <source>
        <strain>ATCC 51363 / DSM 5348 / JCM 9185 / NBRC 15509 / TH2</strain>
    </source>
</reference>
<dbReference type="EMBL" id="CP000682">
    <property type="protein sequence ID" value="ABP94349.1"/>
    <property type="molecule type" value="Genomic_DNA"/>
</dbReference>
<dbReference type="RefSeq" id="WP_011921317.1">
    <property type="nucleotide sequence ID" value="NZ_CP139956.1"/>
</dbReference>
<dbReference type="SMR" id="A4YD47"/>
<dbReference type="STRING" id="399549.Msed_0172"/>
<dbReference type="KEGG" id="mse:Msed_0172"/>
<dbReference type="eggNOG" id="arCOG04154">
    <property type="taxonomic scope" value="Archaea"/>
</dbReference>
<dbReference type="HOGENOM" id="CLU_080597_2_1_2"/>
<dbReference type="Proteomes" id="UP000000242">
    <property type="component" value="Chromosome"/>
</dbReference>
<dbReference type="GO" id="GO:1990904">
    <property type="term" value="C:ribonucleoprotein complex"/>
    <property type="evidence" value="ECO:0007669"/>
    <property type="project" value="UniProtKB-KW"/>
</dbReference>
<dbReference type="GO" id="GO:0005840">
    <property type="term" value="C:ribosome"/>
    <property type="evidence" value="ECO:0007669"/>
    <property type="project" value="UniProtKB-KW"/>
</dbReference>
<dbReference type="GO" id="GO:0003735">
    <property type="term" value="F:structural constituent of ribosome"/>
    <property type="evidence" value="ECO:0007669"/>
    <property type="project" value="InterPro"/>
</dbReference>
<dbReference type="GO" id="GO:0006412">
    <property type="term" value="P:translation"/>
    <property type="evidence" value="ECO:0007669"/>
    <property type="project" value="UniProtKB-UniRule"/>
</dbReference>
<dbReference type="CDD" id="cd11382">
    <property type="entry name" value="Ribosomal_S8e"/>
    <property type="match status" value="1"/>
</dbReference>
<dbReference type="FunFam" id="2.40.10.310:FF:000002">
    <property type="entry name" value="30S ribosomal protein S8e"/>
    <property type="match status" value="1"/>
</dbReference>
<dbReference type="Gene3D" id="2.40.10.310">
    <property type="match status" value="1"/>
</dbReference>
<dbReference type="HAMAP" id="MF_00029">
    <property type="entry name" value="Ribosomal_eS8"/>
    <property type="match status" value="1"/>
</dbReference>
<dbReference type="InterPro" id="IPR001047">
    <property type="entry name" value="Ribosomal_eS8"/>
</dbReference>
<dbReference type="InterPro" id="IPR018283">
    <property type="entry name" value="Ribosomal_eS8_CS"/>
</dbReference>
<dbReference type="InterPro" id="IPR020919">
    <property type="entry name" value="Ribosomal_protein_eS8_arc"/>
</dbReference>
<dbReference type="InterPro" id="IPR022309">
    <property type="entry name" value="Ribosomal_Se8/biogenesis_NSA2"/>
</dbReference>
<dbReference type="NCBIfam" id="TIGR00307">
    <property type="entry name" value="eS8"/>
    <property type="match status" value="1"/>
</dbReference>
<dbReference type="PANTHER" id="PTHR10394">
    <property type="entry name" value="40S RIBOSOMAL PROTEIN S8"/>
    <property type="match status" value="1"/>
</dbReference>
<dbReference type="Pfam" id="PF01201">
    <property type="entry name" value="Ribosomal_S8e"/>
    <property type="match status" value="1"/>
</dbReference>
<dbReference type="PROSITE" id="PS01193">
    <property type="entry name" value="RIBOSOMAL_S8E"/>
    <property type="match status" value="1"/>
</dbReference>
<proteinExistence type="inferred from homology"/>
<protein>
    <recommendedName>
        <fullName evidence="1">Small ribosomal subunit protein eS8</fullName>
    </recommendedName>
    <alternativeName>
        <fullName evidence="2">30S ribosomal protein S8e</fullName>
    </alternativeName>
</protein>
<accession>A4YD47</accession>
<evidence type="ECO:0000255" key="1">
    <source>
        <dbReference type="HAMAP-Rule" id="MF_00029"/>
    </source>
</evidence>
<evidence type="ECO:0000305" key="2"/>
<organism>
    <name type="scientific">Metallosphaera sedula (strain ATCC 51363 / DSM 5348 / JCM 9185 / NBRC 15509 / TH2)</name>
    <dbReference type="NCBI Taxonomy" id="399549"/>
    <lineage>
        <taxon>Archaea</taxon>
        <taxon>Thermoproteota</taxon>
        <taxon>Thermoprotei</taxon>
        <taxon>Sulfolobales</taxon>
        <taxon>Sulfolobaceae</taxon>
        <taxon>Metallosphaera</taxon>
    </lineage>
</organism>
<feature type="chain" id="PRO_1000071012" description="Small ribosomal subunit protein eS8">
    <location>
        <begin position="1"/>
        <end position="128"/>
    </location>
</feature>